<accession>Q6G780</accession>
<evidence type="ECO:0000255" key="1">
    <source>
        <dbReference type="HAMAP-Rule" id="MF_01345"/>
    </source>
</evidence>
<evidence type="ECO:0000305" key="2"/>
<comment type="function">
    <text evidence="1">One of the primary rRNA binding proteins, it binds specifically to the 5'-end of 16S ribosomal RNA.</text>
</comment>
<comment type="subunit">
    <text evidence="1">Part of the 30S ribosomal subunit.</text>
</comment>
<comment type="similarity">
    <text evidence="1">Belongs to the universal ribosomal protein uS17 family.</text>
</comment>
<sequence length="87" mass="10175">MSERNDRKVYVGKVVSDKMDKTITVLVETYKTHKLYGKRVKYSKKYKTHDENNSAKLGDIVKIQETRPLSATKRFRLVEIVEESVII</sequence>
<gene>
    <name evidence="1" type="primary">rpsQ</name>
    <name type="ordered locus">SAS2132</name>
</gene>
<organism>
    <name type="scientific">Staphylococcus aureus (strain MSSA476)</name>
    <dbReference type="NCBI Taxonomy" id="282459"/>
    <lineage>
        <taxon>Bacteria</taxon>
        <taxon>Bacillati</taxon>
        <taxon>Bacillota</taxon>
        <taxon>Bacilli</taxon>
        <taxon>Bacillales</taxon>
        <taxon>Staphylococcaceae</taxon>
        <taxon>Staphylococcus</taxon>
    </lineage>
</organism>
<name>RS17_STAAS</name>
<feature type="chain" id="PRO_0000128482" description="Small ribosomal subunit protein uS17">
    <location>
        <begin position="1"/>
        <end position="87"/>
    </location>
</feature>
<reference key="1">
    <citation type="journal article" date="2004" name="Proc. Natl. Acad. Sci. U.S.A.">
        <title>Complete genomes of two clinical Staphylococcus aureus strains: evidence for the rapid evolution of virulence and drug resistance.</title>
        <authorList>
            <person name="Holden M.T.G."/>
            <person name="Feil E.J."/>
            <person name="Lindsay J.A."/>
            <person name="Peacock S.J."/>
            <person name="Day N.P.J."/>
            <person name="Enright M.C."/>
            <person name="Foster T.J."/>
            <person name="Moore C.E."/>
            <person name="Hurst L."/>
            <person name="Atkin R."/>
            <person name="Barron A."/>
            <person name="Bason N."/>
            <person name="Bentley S.D."/>
            <person name="Chillingworth C."/>
            <person name="Chillingworth T."/>
            <person name="Churcher C."/>
            <person name="Clark L."/>
            <person name="Corton C."/>
            <person name="Cronin A."/>
            <person name="Doggett J."/>
            <person name="Dowd L."/>
            <person name="Feltwell T."/>
            <person name="Hance Z."/>
            <person name="Harris B."/>
            <person name="Hauser H."/>
            <person name="Holroyd S."/>
            <person name="Jagels K."/>
            <person name="James K.D."/>
            <person name="Lennard N."/>
            <person name="Line A."/>
            <person name="Mayes R."/>
            <person name="Moule S."/>
            <person name="Mungall K."/>
            <person name="Ormond D."/>
            <person name="Quail M.A."/>
            <person name="Rabbinowitsch E."/>
            <person name="Rutherford K.M."/>
            <person name="Sanders M."/>
            <person name="Sharp S."/>
            <person name="Simmonds M."/>
            <person name="Stevens K."/>
            <person name="Whitehead S."/>
            <person name="Barrell B.G."/>
            <person name="Spratt B.G."/>
            <person name="Parkhill J."/>
        </authorList>
    </citation>
    <scope>NUCLEOTIDE SEQUENCE [LARGE SCALE GENOMIC DNA]</scope>
    <source>
        <strain>MSSA476</strain>
    </source>
</reference>
<dbReference type="EMBL" id="BX571857">
    <property type="protein sequence ID" value="CAG43943.1"/>
    <property type="molecule type" value="Genomic_DNA"/>
</dbReference>
<dbReference type="RefSeq" id="WP_000004086.1">
    <property type="nucleotide sequence ID" value="NC_002953.3"/>
</dbReference>
<dbReference type="SMR" id="Q6G780"/>
<dbReference type="GeneID" id="98346553"/>
<dbReference type="KEGG" id="sas:SAS2132"/>
<dbReference type="HOGENOM" id="CLU_073626_1_0_9"/>
<dbReference type="GO" id="GO:0022627">
    <property type="term" value="C:cytosolic small ribosomal subunit"/>
    <property type="evidence" value="ECO:0007669"/>
    <property type="project" value="TreeGrafter"/>
</dbReference>
<dbReference type="GO" id="GO:0019843">
    <property type="term" value="F:rRNA binding"/>
    <property type="evidence" value="ECO:0007669"/>
    <property type="project" value="UniProtKB-UniRule"/>
</dbReference>
<dbReference type="GO" id="GO:0003735">
    <property type="term" value="F:structural constituent of ribosome"/>
    <property type="evidence" value="ECO:0007669"/>
    <property type="project" value="InterPro"/>
</dbReference>
<dbReference type="GO" id="GO:0006412">
    <property type="term" value="P:translation"/>
    <property type="evidence" value="ECO:0007669"/>
    <property type="project" value="UniProtKB-UniRule"/>
</dbReference>
<dbReference type="CDD" id="cd00364">
    <property type="entry name" value="Ribosomal_uS17"/>
    <property type="match status" value="1"/>
</dbReference>
<dbReference type="FunFam" id="2.40.50.140:FF:000026">
    <property type="entry name" value="30S ribosomal protein S17"/>
    <property type="match status" value="1"/>
</dbReference>
<dbReference type="Gene3D" id="2.40.50.140">
    <property type="entry name" value="Nucleic acid-binding proteins"/>
    <property type="match status" value="1"/>
</dbReference>
<dbReference type="HAMAP" id="MF_01345_B">
    <property type="entry name" value="Ribosomal_uS17_B"/>
    <property type="match status" value="1"/>
</dbReference>
<dbReference type="InterPro" id="IPR012340">
    <property type="entry name" value="NA-bd_OB-fold"/>
</dbReference>
<dbReference type="InterPro" id="IPR000266">
    <property type="entry name" value="Ribosomal_uS17"/>
</dbReference>
<dbReference type="InterPro" id="IPR019984">
    <property type="entry name" value="Ribosomal_uS17_bact/chlr"/>
</dbReference>
<dbReference type="InterPro" id="IPR019979">
    <property type="entry name" value="Ribosomal_uS17_CS"/>
</dbReference>
<dbReference type="NCBIfam" id="NF004123">
    <property type="entry name" value="PRK05610.1"/>
    <property type="match status" value="1"/>
</dbReference>
<dbReference type="NCBIfam" id="TIGR03635">
    <property type="entry name" value="uS17_bact"/>
    <property type="match status" value="1"/>
</dbReference>
<dbReference type="PANTHER" id="PTHR10744">
    <property type="entry name" value="40S RIBOSOMAL PROTEIN S11 FAMILY MEMBER"/>
    <property type="match status" value="1"/>
</dbReference>
<dbReference type="PANTHER" id="PTHR10744:SF1">
    <property type="entry name" value="SMALL RIBOSOMAL SUBUNIT PROTEIN US17M"/>
    <property type="match status" value="1"/>
</dbReference>
<dbReference type="Pfam" id="PF00366">
    <property type="entry name" value="Ribosomal_S17"/>
    <property type="match status" value="1"/>
</dbReference>
<dbReference type="PRINTS" id="PR00973">
    <property type="entry name" value="RIBOSOMALS17"/>
</dbReference>
<dbReference type="SUPFAM" id="SSF50249">
    <property type="entry name" value="Nucleic acid-binding proteins"/>
    <property type="match status" value="1"/>
</dbReference>
<dbReference type="PROSITE" id="PS00056">
    <property type="entry name" value="RIBOSOMAL_S17"/>
    <property type="match status" value="1"/>
</dbReference>
<keyword id="KW-0687">Ribonucleoprotein</keyword>
<keyword id="KW-0689">Ribosomal protein</keyword>
<keyword id="KW-0694">RNA-binding</keyword>
<keyword id="KW-0699">rRNA-binding</keyword>
<proteinExistence type="inferred from homology"/>
<protein>
    <recommendedName>
        <fullName evidence="1">Small ribosomal subunit protein uS17</fullName>
    </recommendedName>
    <alternativeName>
        <fullName evidence="2">30S ribosomal protein S17</fullName>
    </alternativeName>
</protein>